<protein>
    <recommendedName>
        <fullName>UPF0147 protein PH1921.2</fullName>
    </recommendedName>
</protein>
<reference key="1">
    <citation type="journal article" date="1998" name="DNA Res.">
        <title>Complete sequence and gene organization of the genome of a hyper-thermophilic archaebacterium, Pyrococcus horikoshii OT3.</title>
        <authorList>
            <person name="Kawarabayasi Y."/>
            <person name="Sawada M."/>
            <person name="Horikawa H."/>
            <person name="Haikawa Y."/>
            <person name="Hino Y."/>
            <person name="Yamamoto S."/>
            <person name="Sekine M."/>
            <person name="Baba S."/>
            <person name="Kosugi H."/>
            <person name="Hosoyama A."/>
            <person name="Nagai Y."/>
            <person name="Sakai M."/>
            <person name="Ogura K."/>
            <person name="Otsuka R."/>
            <person name="Nakazawa H."/>
            <person name="Takamiya M."/>
            <person name="Ohfuku Y."/>
            <person name="Funahashi T."/>
            <person name="Tanaka T."/>
            <person name="Kudoh Y."/>
            <person name="Yamazaki J."/>
            <person name="Kushida N."/>
            <person name="Oguchi A."/>
            <person name="Aoki K."/>
            <person name="Yoshizawa T."/>
            <person name="Nakamura Y."/>
            <person name="Robb F.T."/>
            <person name="Horikoshi K."/>
            <person name="Masuchi Y."/>
            <person name="Shizuya H."/>
            <person name="Kikuchi H."/>
        </authorList>
    </citation>
    <scope>NUCLEOTIDE SEQUENCE [LARGE SCALE GENOMIC DNA]</scope>
    <source>
        <strain>ATCC 700860 / DSM 12428 / JCM 9974 / NBRC 100139 / OT-3</strain>
    </source>
</reference>
<feature type="chain" id="PRO_0000150914" description="UPF0147 protein PH1921.2">
    <location>
        <begin position="1"/>
        <end position="93"/>
    </location>
</feature>
<gene>
    <name type="ordered locus">PH1921.2</name>
    <name type="ORF">PHS059</name>
</gene>
<name>YJ2B_PYRHO</name>
<accession>O74108</accession>
<proteinExistence type="inferred from homology"/>
<evidence type="ECO:0000305" key="1"/>
<sequence>MIKEVILMTNVEERIEQIIQVLREQVVQDTAVPRNIRRAAEQAIEALMNKEKEPAVRAADAIAILEEISEDPNMPLHTRTIIWEVLGALEQIK</sequence>
<comment type="similarity">
    <text evidence="1">Belongs to the UPF0147 family.</text>
</comment>
<organism>
    <name type="scientific">Pyrococcus horikoshii (strain ATCC 700860 / DSM 12428 / JCM 9974 / NBRC 100139 / OT-3)</name>
    <dbReference type="NCBI Taxonomy" id="70601"/>
    <lineage>
        <taxon>Archaea</taxon>
        <taxon>Methanobacteriati</taxon>
        <taxon>Methanobacteriota</taxon>
        <taxon>Thermococci</taxon>
        <taxon>Thermococcales</taxon>
        <taxon>Thermococcaceae</taxon>
        <taxon>Pyrococcus</taxon>
    </lineage>
</organism>
<dbReference type="EMBL" id="BA000001">
    <property type="protein sequence ID" value="BAA31048.1"/>
    <property type="molecule type" value="Genomic_DNA"/>
</dbReference>
<dbReference type="PIR" id="A71207">
    <property type="entry name" value="A71207"/>
</dbReference>
<dbReference type="SMR" id="O74108"/>
<dbReference type="STRING" id="70601.gene:9378933"/>
<dbReference type="EnsemblBacteria" id="BAA31048">
    <property type="protein sequence ID" value="BAA31048"/>
    <property type="gene ID" value="BAA31048"/>
</dbReference>
<dbReference type="KEGG" id="pho:PHS059"/>
<dbReference type="eggNOG" id="arCOG04308">
    <property type="taxonomic scope" value="Archaea"/>
</dbReference>
<dbReference type="Proteomes" id="UP000000752">
    <property type="component" value="Chromosome"/>
</dbReference>
<dbReference type="Gene3D" id="1.20.1440.50">
    <property type="entry name" value="Ta0600-like"/>
    <property type="match status" value="1"/>
</dbReference>
<dbReference type="HAMAP" id="MF_00342">
    <property type="entry name" value="UPF0147"/>
    <property type="match status" value="1"/>
</dbReference>
<dbReference type="InterPro" id="IPR023130">
    <property type="entry name" value="Ta0600-like_sf"/>
</dbReference>
<dbReference type="InterPro" id="IPR005354">
    <property type="entry name" value="UPF0147"/>
</dbReference>
<dbReference type="NCBIfam" id="NF003319">
    <property type="entry name" value="PRK04330.1"/>
    <property type="match status" value="1"/>
</dbReference>
<dbReference type="Pfam" id="PF03685">
    <property type="entry name" value="UPF0147"/>
    <property type="match status" value="1"/>
</dbReference>
<dbReference type="SUPFAM" id="SSF158436">
    <property type="entry name" value="Ta0600-like"/>
    <property type="match status" value="1"/>
</dbReference>